<gene>
    <name type="primary">butB</name>
</gene>
<name>SLAP_NIACI</name>
<reference key="1">
    <citation type="journal article" date="1994" name="Gene">
        <title>Biosynthesis of butirosin in Bacillus circulans NRRL B3312: identification by sequence analysis and insertional mutagenesis of the butB gene involved in antibiotic production.</title>
        <authorList>
            <person name="Aubert-Pivert E."/>
            <person name="Davies J."/>
        </authorList>
    </citation>
    <scope>NUCLEOTIDE SEQUENCE [GENOMIC DNA]</scope>
    <source>
        <strain>BCRC 11491 / NRRL B-3312</strain>
    </source>
</reference>
<protein>
    <recommendedName>
        <fullName>S-layer-related protein</fullName>
    </recommendedName>
</protein>
<keyword id="KW-0134">Cell wall</keyword>
<keyword id="KW-0701">S-layer</keyword>
<keyword id="KW-0964">Secreted</keyword>
<keyword id="KW-0732">Signal</keyword>
<organism>
    <name type="scientific">Niallia circulans</name>
    <name type="common">Bacillus circulans</name>
    <dbReference type="NCBI Taxonomy" id="1397"/>
    <lineage>
        <taxon>Bacteria</taxon>
        <taxon>Bacillati</taxon>
        <taxon>Bacillota</taxon>
        <taxon>Bacilli</taxon>
        <taxon>Bacillales</taxon>
        <taxon>Bacillaceae</taxon>
        <taxon>Niallia</taxon>
    </lineage>
</organism>
<evidence type="ECO:0000255" key="1"/>
<evidence type="ECO:0000255" key="2">
    <source>
        <dbReference type="PROSITE-ProRule" id="PRU00777"/>
    </source>
</evidence>
<evidence type="ECO:0000256" key="3">
    <source>
        <dbReference type="SAM" id="MobiDB-lite"/>
    </source>
</evidence>
<comment type="function">
    <text>The S-layer is a paracrystalline mono-layered assembly of proteins which coats the surface of bacteria. May play a role in the export of butirosin from the organism.</text>
</comment>
<comment type="subcellular location">
    <subcellularLocation>
        <location>Secreted</location>
        <location>Cell wall</location>
        <location>S-layer</location>
    </subcellularLocation>
    <text>This bacterium is covered by a S-layer with hexagonal symmetry.</text>
</comment>
<dbReference type="EMBL" id="L20421">
    <property type="protein sequence ID" value="AAA62588.1"/>
    <property type="molecule type" value="Genomic_DNA"/>
</dbReference>
<dbReference type="PIR" id="T17884">
    <property type="entry name" value="T17884"/>
</dbReference>
<dbReference type="GO" id="GO:0005576">
    <property type="term" value="C:extracellular region"/>
    <property type="evidence" value="ECO:0007669"/>
    <property type="project" value="UniProtKB-KW"/>
</dbReference>
<dbReference type="GO" id="GO:0030115">
    <property type="term" value="C:S-layer"/>
    <property type="evidence" value="ECO:0007669"/>
    <property type="project" value="UniProtKB-SubCell"/>
</dbReference>
<dbReference type="Gene3D" id="2.60.40.1080">
    <property type="match status" value="1"/>
</dbReference>
<dbReference type="Gene3D" id="3.20.20.80">
    <property type="entry name" value="Glycosidases"/>
    <property type="match status" value="1"/>
</dbReference>
<dbReference type="Gene3D" id="2.60.40.10">
    <property type="entry name" value="Immunoglobulins"/>
    <property type="match status" value="3"/>
</dbReference>
<dbReference type="InterPro" id="IPR003343">
    <property type="entry name" value="Big_2"/>
</dbReference>
<dbReference type="InterPro" id="IPR052177">
    <property type="entry name" value="Divisome_Glycosyl_Hydrolase"/>
</dbReference>
<dbReference type="InterPro" id="IPR003790">
    <property type="entry name" value="GHL10"/>
</dbReference>
<dbReference type="InterPro" id="IPR017853">
    <property type="entry name" value="Glycoside_hydrolase_SF"/>
</dbReference>
<dbReference type="InterPro" id="IPR013783">
    <property type="entry name" value="Ig-like_fold"/>
</dbReference>
<dbReference type="InterPro" id="IPR008964">
    <property type="entry name" value="Invasin/intimin_cell_adhesion"/>
</dbReference>
<dbReference type="InterPro" id="IPR001119">
    <property type="entry name" value="SLH_dom"/>
</dbReference>
<dbReference type="PANTHER" id="PTHR43405">
    <property type="entry name" value="GLYCOSYL HYDROLASE DIGH"/>
    <property type="match status" value="1"/>
</dbReference>
<dbReference type="PANTHER" id="PTHR43405:SF1">
    <property type="entry name" value="GLYCOSYL HYDROLASE DIGH"/>
    <property type="match status" value="1"/>
</dbReference>
<dbReference type="Pfam" id="PF02368">
    <property type="entry name" value="Big_2"/>
    <property type="match status" value="1"/>
</dbReference>
<dbReference type="Pfam" id="PF02638">
    <property type="entry name" value="GHL10"/>
    <property type="match status" value="1"/>
</dbReference>
<dbReference type="Pfam" id="PF09136">
    <property type="entry name" value="Glucodextran_B"/>
    <property type="match status" value="1"/>
</dbReference>
<dbReference type="Pfam" id="PF00395">
    <property type="entry name" value="SLH"/>
    <property type="match status" value="1"/>
</dbReference>
<dbReference type="SMART" id="SM00635">
    <property type="entry name" value="BID_2"/>
    <property type="match status" value="1"/>
</dbReference>
<dbReference type="SUPFAM" id="SSF51445">
    <property type="entry name" value="(Trans)glycosidases"/>
    <property type="match status" value="1"/>
</dbReference>
<dbReference type="SUPFAM" id="SSF49373">
    <property type="entry name" value="Invasin/intimin cell-adhesion fragments"/>
    <property type="match status" value="1"/>
</dbReference>
<dbReference type="PROSITE" id="PS51272">
    <property type="entry name" value="SLH"/>
    <property type="match status" value="1"/>
</dbReference>
<sequence>MKSLLRKWNGMMIIALVISLLTPAWGKASAQSLGQESGGVQPQSAGVTDDVYVLSRDGTFRLPVGHINVNVDAPPQKTNYVALFTSGAQVTNSQETDKVFVKKTNTAIAVDKHDQVIRVIGPTAVPPTGSTWEENQNLPIPEGGYVLLANDSSWGTSVTRKPLFEHYKTGDTVSLHKGGQVVHAGDFLNPDPGLNLVTASGTTVTSPDFTVSGQVVRYGSGQGISLTVNGTEAALKADGAFQSAVRLTAGTNAISVKLLKDGREIVSSTVTVTYNDAQQPADLIEVEAAPIDITISIEGPAHAIGYVDQDIAGIDDTVALFTNDWGPQITVPQFNVAVQVDAGSKVTKVVNPSIDGKTPAWTGPTDLEIPSGGYVLVAQDTSYAGKNIKKYLATYFKVGDAIKLRKNGFAVPVKDLMGTGGPIARVTLDNYAMYTETKPSTELSGTITNMDDPSKIALTVNGTPLPFGPDGKFKTSYTLAEGINYLDLVVTKEGKEQDSKDLVVYSRPGFSTGKKVILWVDQAANARKFQTGDNVANFLRTAKENGVTSVVFDVKGVEGYVSYKKSTLTGRPYVSAIKAPEKAGSNPDLDLLQEFIRYSRELGLDIHVSFNIFAEGSIASNEFALLDSHLDWEERVYNAADNGQIKRLRESAKQGAVAFVNPSNDEVRDFQLKTIEEVLQNYDVDGVVLDRARYDNESADFSDLTKAKFESFLGARGKQLQNWPDDVFTYAGNVRKDGPLIRDWWEFRSKTIKSFTSEVRQLTDRVKAEKGKKIEVSAYVGSWFESYYLNGVHWGSTEFRYDERLRMKDKSVYTPGYYESGYVKNLDFIMIGAYQTTAPEIEHYITLGNIVTNGEVPLYAGIALTNVQEPALQRDVFQAGLVNTHGLMLFDASQVNWPVAGAALRNLVYVRDYQLGISLPDSPDSFLEGSYYNTNLIENNIGVLTDTFGYSTGNSRFGVEAVVDSSGKVTSVPNKTQAMTWNWGKPDETNSVIPKGGFVVSTLDASGIRTKRQLVANAYETGDSVRAAALSGFLAYEGLRTSADSVTFRGKVDVLGPGKASVTVNGQEAALREDGTFQADTVIRPGANPVVIIVRVDGFKTNEKTVTIIGDEAAVKALKLDRGTYSMNKGESLRLAVTAEYSSSSTDVTGQAAYASLDPAVVSVDATGRITALREGSGTVQATYEGHTATARVSVTSGSTGGGSDTGSGTGSGSGGGSAGGGGTAPSGPERTSVTETKDSDGRNLTLVSADAGVMEAEIAALQGKAAPVLSYEIPGEEPAGIVSLPGTALAKRFAGSPGAILSVSSHLGAIELPAGLLEADLPAVGSFDLLVQIGRTAADETADLRPGGERRHAGTRHAGCFPCFAENRRRNKRNRRLRKLRPKNRKLAGSGRPLTAPRRWSWTRPPECSASCPPASNRPGARRRPLSATEAGGPTRWSPPRSASPTLHPTGRARMSSCWPRSIVDGMGAGGFSPDEALTRAQFAALLTRALALDPAPAAADFTDIPGDAWYAGAVARRSGPARGRFRNRGVPTRRGADTRTDERDAHARREAGRYPDGGELRCRCAGALRGPGRNLRLGGRCRFAGGGSRPAGRTRGRTLRARPARLPVRKARPC</sequence>
<proteinExistence type="inferred from homology"/>
<feature type="signal peptide" evidence="1">
    <location>
        <begin position="1"/>
        <end position="30"/>
    </location>
</feature>
<feature type="chain" id="PRO_0000032629" description="S-layer-related protein">
    <location>
        <begin position="31"/>
        <end position="1616"/>
    </location>
</feature>
<feature type="domain" description="BIG2" evidence="1">
    <location>
        <begin position="1115"/>
        <end position="1185"/>
    </location>
</feature>
<feature type="domain" description="SLH" evidence="2">
    <location>
        <begin position="1438"/>
        <end position="1502"/>
    </location>
</feature>
<feature type="region of interest" description="Disordered" evidence="3">
    <location>
        <begin position="1191"/>
        <end position="1244"/>
    </location>
</feature>
<feature type="region of interest" description="Disordered" evidence="3">
    <location>
        <begin position="1372"/>
        <end position="1455"/>
    </location>
</feature>
<feature type="region of interest" description="Disordered" evidence="3">
    <location>
        <begin position="1523"/>
        <end position="1554"/>
    </location>
</feature>
<feature type="region of interest" description="Disordered" evidence="3">
    <location>
        <begin position="1585"/>
        <end position="1616"/>
    </location>
</feature>
<feature type="compositionally biased region" description="Gly residues" evidence="3">
    <location>
        <begin position="1199"/>
        <end position="1225"/>
    </location>
</feature>
<feature type="compositionally biased region" description="Basic residues" evidence="3">
    <location>
        <begin position="1372"/>
        <end position="1387"/>
    </location>
</feature>
<feature type="compositionally biased region" description="Low complexity" evidence="3">
    <location>
        <begin position="1406"/>
        <end position="1416"/>
    </location>
</feature>
<feature type="compositionally biased region" description="Basic and acidic residues" evidence="3">
    <location>
        <begin position="1536"/>
        <end position="1554"/>
    </location>
</feature>
<feature type="compositionally biased region" description="Basic residues" evidence="3">
    <location>
        <begin position="1594"/>
        <end position="1616"/>
    </location>
</feature>
<accession>P35824</accession>